<comment type="catalytic activity">
    <reaction evidence="1">
        <text>5-amino-1-(5-phospho-D-ribosyl)imidazole-4-carboxylate + L-aspartate + ATP = (2S)-2-[5-amino-1-(5-phospho-beta-D-ribosyl)imidazole-4-carboxamido]succinate + ADP + phosphate + 2 H(+)</text>
        <dbReference type="Rhea" id="RHEA:22628"/>
        <dbReference type="ChEBI" id="CHEBI:15378"/>
        <dbReference type="ChEBI" id="CHEBI:29991"/>
        <dbReference type="ChEBI" id="CHEBI:30616"/>
        <dbReference type="ChEBI" id="CHEBI:43474"/>
        <dbReference type="ChEBI" id="CHEBI:58443"/>
        <dbReference type="ChEBI" id="CHEBI:77657"/>
        <dbReference type="ChEBI" id="CHEBI:456216"/>
        <dbReference type="EC" id="6.3.2.6"/>
    </reaction>
</comment>
<comment type="pathway">
    <text evidence="1">Purine metabolism; IMP biosynthesis via de novo pathway; 5-amino-1-(5-phospho-D-ribosyl)imidazole-4-carboxamide from 5-amino-1-(5-phospho-D-ribosyl)imidazole-4-carboxylate: step 1/2.</text>
</comment>
<comment type="similarity">
    <text evidence="1">Belongs to the SAICAR synthetase family.</text>
</comment>
<organism>
    <name type="scientific">Clostridium botulinum (strain Langeland / NCTC 10281 / Type F)</name>
    <dbReference type="NCBI Taxonomy" id="441772"/>
    <lineage>
        <taxon>Bacteria</taxon>
        <taxon>Bacillati</taxon>
        <taxon>Bacillota</taxon>
        <taxon>Clostridia</taxon>
        <taxon>Eubacteriales</taxon>
        <taxon>Clostridiaceae</taxon>
        <taxon>Clostridium</taxon>
    </lineage>
</organism>
<proteinExistence type="inferred from homology"/>
<dbReference type="EC" id="6.3.2.6" evidence="1"/>
<dbReference type="EMBL" id="CP000728">
    <property type="protein sequence ID" value="ABS39290.1"/>
    <property type="molecule type" value="Genomic_DNA"/>
</dbReference>
<dbReference type="RefSeq" id="WP_012100669.1">
    <property type="nucleotide sequence ID" value="NC_009699.1"/>
</dbReference>
<dbReference type="SMR" id="A7GHA0"/>
<dbReference type="KEGG" id="cbf:CLI_2935"/>
<dbReference type="HOGENOM" id="CLU_061495_2_0_9"/>
<dbReference type="UniPathway" id="UPA00074">
    <property type="reaction ID" value="UER00131"/>
</dbReference>
<dbReference type="Proteomes" id="UP000002410">
    <property type="component" value="Chromosome"/>
</dbReference>
<dbReference type="GO" id="GO:0005524">
    <property type="term" value="F:ATP binding"/>
    <property type="evidence" value="ECO:0007669"/>
    <property type="project" value="UniProtKB-KW"/>
</dbReference>
<dbReference type="GO" id="GO:0004639">
    <property type="term" value="F:phosphoribosylaminoimidazolesuccinocarboxamide synthase activity"/>
    <property type="evidence" value="ECO:0007669"/>
    <property type="project" value="UniProtKB-UniRule"/>
</dbReference>
<dbReference type="GO" id="GO:0006189">
    <property type="term" value="P:'de novo' IMP biosynthetic process"/>
    <property type="evidence" value="ECO:0007669"/>
    <property type="project" value="UniProtKB-UniRule"/>
</dbReference>
<dbReference type="GO" id="GO:0009236">
    <property type="term" value="P:cobalamin biosynthetic process"/>
    <property type="evidence" value="ECO:0007669"/>
    <property type="project" value="InterPro"/>
</dbReference>
<dbReference type="CDD" id="cd01415">
    <property type="entry name" value="SAICAR_synt_PurC"/>
    <property type="match status" value="1"/>
</dbReference>
<dbReference type="FunFam" id="3.30.200.20:FF:000189">
    <property type="entry name" value="Phosphoribosylaminoimidazole-succinocarboxamide synthase"/>
    <property type="match status" value="1"/>
</dbReference>
<dbReference type="FunFam" id="3.30.470.20:FF:000006">
    <property type="entry name" value="Phosphoribosylaminoimidazole-succinocarboxamide synthase"/>
    <property type="match status" value="1"/>
</dbReference>
<dbReference type="Gene3D" id="3.30.470.20">
    <property type="entry name" value="ATP-grasp fold, B domain"/>
    <property type="match status" value="1"/>
</dbReference>
<dbReference type="Gene3D" id="3.30.200.20">
    <property type="entry name" value="Phosphorylase Kinase, domain 1"/>
    <property type="match status" value="1"/>
</dbReference>
<dbReference type="HAMAP" id="MF_00137">
    <property type="entry name" value="SAICAR_synth"/>
    <property type="match status" value="1"/>
</dbReference>
<dbReference type="InterPro" id="IPR028923">
    <property type="entry name" value="SAICAR_synt/ADE2_N"/>
</dbReference>
<dbReference type="InterPro" id="IPR033934">
    <property type="entry name" value="SAICAR_synt_PurC"/>
</dbReference>
<dbReference type="InterPro" id="IPR001636">
    <property type="entry name" value="SAICAR_synth"/>
</dbReference>
<dbReference type="InterPro" id="IPR050089">
    <property type="entry name" value="SAICAR_synthetase"/>
</dbReference>
<dbReference type="InterPro" id="IPR018236">
    <property type="entry name" value="SAICAR_synthetase_CS"/>
</dbReference>
<dbReference type="NCBIfam" id="TIGR00081">
    <property type="entry name" value="purC"/>
    <property type="match status" value="1"/>
</dbReference>
<dbReference type="PANTHER" id="PTHR43599">
    <property type="entry name" value="MULTIFUNCTIONAL PROTEIN ADE2"/>
    <property type="match status" value="1"/>
</dbReference>
<dbReference type="PANTHER" id="PTHR43599:SF3">
    <property type="entry name" value="SI:DKEY-6E2.2"/>
    <property type="match status" value="1"/>
</dbReference>
<dbReference type="Pfam" id="PF01259">
    <property type="entry name" value="SAICAR_synt"/>
    <property type="match status" value="1"/>
</dbReference>
<dbReference type="SUPFAM" id="SSF56104">
    <property type="entry name" value="SAICAR synthase-like"/>
    <property type="match status" value="1"/>
</dbReference>
<dbReference type="PROSITE" id="PS01057">
    <property type="entry name" value="SAICAR_SYNTHETASE_1"/>
    <property type="match status" value="1"/>
</dbReference>
<dbReference type="PROSITE" id="PS01058">
    <property type="entry name" value="SAICAR_SYNTHETASE_2"/>
    <property type="match status" value="1"/>
</dbReference>
<accession>A7GHA0</accession>
<feature type="chain" id="PRO_1000018691" description="Phosphoribosylaminoimidazole-succinocarboxamide synthase">
    <location>
        <begin position="1"/>
        <end position="234"/>
    </location>
</feature>
<name>PUR7_CLOBL</name>
<keyword id="KW-0067">ATP-binding</keyword>
<keyword id="KW-0436">Ligase</keyword>
<keyword id="KW-0547">Nucleotide-binding</keyword>
<keyword id="KW-0658">Purine biosynthesis</keyword>
<sequence length="234" mass="26979">MEKKDMLYEGKAKKIFRTDDKDTVVVYYKDDATAFNGEKKGTIEDKGVMNNSITAMLFELLEKKGVKTHFIEKINEREQLCKKVEIVPLEVIVRNIAAGSMAKILGLSEGRKLDTTVFEISYKNDDLNDPLINDYHAVAIGLTNFEELKEMYSIAEKVNNTLKEFFDEQGINLVDFKIEIGRFNGELLLADEISPDTCRLWDKKTGEKLDKDRFRRDMGNVKEAYMEILKRVNK</sequence>
<evidence type="ECO:0000255" key="1">
    <source>
        <dbReference type="HAMAP-Rule" id="MF_00137"/>
    </source>
</evidence>
<protein>
    <recommendedName>
        <fullName evidence="1">Phosphoribosylaminoimidazole-succinocarboxamide synthase</fullName>
        <ecNumber evidence="1">6.3.2.6</ecNumber>
    </recommendedName>
    <alternativeName>
        <fullName evidence="1">SAICAR synthetase</fullName>
    </alternativeName>
</protein>
<reference key="1">
    <citation type="submission" date="2007-06" db="EMBL/GenBank/DDBJ databases">
        <authorList>
            <person name="Brinkac L.M."/>
            <person name="Daugherty S."/>
            <person name="Dodson R.J."/>
            <person name="Madupu R."/>
            <person name="Brown J.L."/>
            <person name="Bruce D."/>
            <person name="Detter C."/>
            <person name="Munk C."/>
            <person name="Smith L.A."/>
            <person name="Smith T.J."/>
            <person name="White O."/>
            <person name="Brettin T.S."/>
        </authorList>
    </citation>
    <scope>NUCLEOTIDE SEQUENCE [LARGE SCALE GENOMIC DNA]</scope>
    <source>
        <strain>Langeland / NCTC 10281 / Type F</strain>
    </source>
</reference>
<gene>
    <name evidence="1" type="primary">purC</name>
    <name type="ordered locus">CLI_2935</name>
</gene>